<dbReference type="EMBL" id="AE005174">
    <property type="protein sequence ID" value="AAG56787.1"/>
    <property type="molecule type" value="Genomic_DNA"/>
</dbReference>
<dbReference type="EMBL" id="BA000007">
    <property type="protein sequence ID" value="BAB35930.1"/>
    <property type="molecule type" value="Genomic_DNA"/>
</dbReference>
<dbReference type="PIR" id="C90942">
    <property type="entry name" value="C90942"/>
</dbReference>
<dbReference type="PIR" id="G85790">
    <property type="entry name" value="G85790"/>
</dbReference>
<dbReference type="RefSeq" id="NP_310534.1">
    <property type="nucleotide sequence ID" value="NC_002695.1"/>
</dbReference>
<dbReference type="RefSeq" id="WP_000457196.1">
    <property type="nucleotide sequence ID" value="NZ_VOAI01000010.1"/>
</dbReference>
<dbReference type="STRING" id="155864.Z2841"/>
<dbReference type="GeneID" id="912651"/>
<dbReference type="KEGG" id="ece:Z2841"/>
<dbReference type="KEGG" id="ecs:ECs_2507"/>
<dbReference type="PATRIC" id="fig|386585.9.peg.2627"/>
<dbReference type="eggNOG" id="COG1280">
    <property type="taxonomic scope" value="Bacteria"/>
</dbReference>
<dbReference type="HOGENOM" id="CLU_079569_3_1_6"/>
<dbReference type="OMA" id="AGVWCGD"/>
<dbReference type="Proteomes" id="UP000000558">
    <property type="component" value="Chromosome"/>
</dbReference>
<dbReference type="Proteomes" id="UP000002519">
    <property type="component" value="Chromosome"/>
</dbReference>
<dbReference type="GO" id="GO:0005886">
    <property type="term" value="C:plasma membrane"/>
    <property type="evidence" value="ECO:0007669"/>
    <property type="project" value="UniProtKB-SubCell"/>
</dbReference>
<dbReference type="GO" id="GO:0015297">
    <property type="term" value="F:antiporter activity"/>
    <property type="evidence" value="ECO:0007669"/>
    <property type="project" value="UniProtKB-KW"/>
</dbReference>
<dbReference type="GO" id="GO:0015190">
    <property type="term" value="F:L-leucine transmembrane transporter activity"/>
    <property type="evidence" value="ECO:0007669"/>
    <property type="project" value="TreeGrafter"/>
</dbReference>
<dbReference type="GO" id="GO:0015820">
    <property type="term" value="P:L-leucine transport"/>
    <property type="evidence" value="ECO:0007669"/>
    <property type="project" value="TreeGrafter"/>
</dbReference>
<dbReference type="InterPro" id="IPR001123">
    <property type="entry name" value="LeuE-type"/>
</dbReference>
<dbReference type="NCBIfam" id="NF008201">
    <property type="entry name" value="PRK10958.1"/>
    <property type="match status" value="1"/>
</dbReference>
<dbReference type="PANTHER" id="PTHR30086">
    <property type="entry name" value="ARGININE EXPORTER PROTEIN ARGO"/>
    <property type="match status" value="1"/>
</dbReference>
<dbReference type="PANTHER" id="PTHR30086:SF15">
    <property type="entry name" value="LEUCINE EFFLUX PROTEIN"/>
    <property type="match status" value="1"/>
</dbReference>
<dbReference type="Pfam" id="PF01810">
    <property type="entry name" value="LysE"/>
    <property type="match status" value="1"/>
</dbReference>
<dbReference type="PIRSF" id="PIRSF006324">
    <property type="entry name" value="LeuE"/>
    <property type="match status" value="1"/>
</dbReference>
<keyword id="KW-0029">Amino-acid transport</keyword>
<keyword id="KW-0050">Antiport</keyword>
<keyword id="KW-0997">Cell inner membrane</keyword>
<keyword id="KW-1003">Cell membrane</keyword>
<keyword id="KW-0472">Membrane</keyword>
<keyword id="KW-1185">Reference proteome</keyword>
<keyword id="KW-0812">Transmembrane</keyword>
<keyword id="KW-1133">Transmembrane helix</keyword>
<keyword id="KW-0813">Transport</keyword>
<name>LEUE_ECO57</name>
<protein>
    <recommendedName>
        <fullName evidence="1">Leucine efflux protein</fullName>
    </recommendedName>
</protein>
<comment type="function">
    <text evidence="1">Exporter of leucine.</text>
</comment>
<comment type="catalytic activity">
    <reaction evidence="1">
        <text>L-leucine(in) + H(+)(out) = L-leucine(out) + H(+)(in)</text>
        <dbReference type="Rhea" id="RHEA:28731"/>
        <dbReference type="ChEBI" id="CHEBI:15378"/>
        <dbReference type="ChEBI" id="CHEBI:57427"/>
    </reaction>
    <physiologicalReaction direction="left-to-right" evidence="1">
        <dbReference type="Rhea" id="RHEA:28732"/>
    </physiologicalReaction>
</comment>
<comment type="subcellular location">
    <subcellularLocation>
        <location evidence="1">Cell inner membrane</location>
        <topology evidence="2">Multi-pass membrane protein</topology>
    </subcellularLocation>
</comment>
<comment type="similarity">
    <text evidence="3">Belongs to the Rht family.</text>
</comment>
<feature type="chain" id="PRO_0000316800" description="Leucine efflux protein">
    <location>
        <begin position="1"/>
        <end position="212"/>
    </location>
</feature>
<feature type="transmembrane region" description="Helical" evidence="2">
    <location>
        <begin position="12"/>
        <end position="32"/>
    </location>
</feature>
<feature type="transmembrane region" description="Helical" evidence="2">
    <location>
        <begin position="49"/>
        <end position="69"/>
    </location>
</feature>
<feature type="transmembrane region" description="Helical" evidence="2">
    <location>
        <begin position="71"/>
        <end position="91"/>
    </location>
</feature>
<feature type="transmembrane region" description="Helical" evidence="2">
    <location>
        <begin position="122"/>
        <end position="142"/>
    </location>
</feature>
<feature type="transmembrane region" description="Helical" evidence="2">
    <location>
        <begin position="153"/>
        <end position="173"/>
    </location>
</feature>
<feature type="transmembrane region" description="Helical" evidence="2">
    <location>
        <begin position="188"/>
        <end position="208"/>
    </location>
</feature>
<accession>Q8XDS6</accession>
<accession>Q7ADA4</accession>
<gene>
    <name type="primary">leuE</name>
    <name type="ordered locus">Z2841</name>
    <name type="ordered locus">ECs2507</name>
</gene>
<sequence length="212" mass="23290">MFAEYGVLNYWTYLVGAIFIVLVPGPNTLFVLKNSVSSGMKGGYLAACGVFIGDAVLMFLAWAGMATLIKTTPILFNIVRYLGAFYLLYLGSKILYATLKGKNNEAKSDEPQYGAIFKRALILSLTNPKAILFYVSFFVQFIDVNAPHTGISFFILATTLELVSFCYLSFLIISGAFVTQYIRTKKKLAKVGNSLIGLMFVGFAARLATLQS</sequence>
<organism>
    <name type="scientific">Escherichia coli O157:H7</name>
    <dbReference type="NCBI Taxonomy" id="83334"/>
    <lineage>
        <taxon>Bacteria</taxon>
        <taxon>Pseudomonadati</taxon>
        <taxon>Pseudomonadota</taxon>
        <taxon>Gammaproteobacteria</taxon>
        <taxon>Enterobacterales</taxon>
        <taxon>Enterobacteriaceae</taxon>
        <taxon>Escherichia</taxon>
    </lineage>
</organism>
<evidence type="ECO:0000250" key="1">
    <source>
        <dbReference type="UniProtKB" id="P76249"/>
    </source>
</evidence>
<evidence type="ECO:0000255" key="2"/>
<evidence type="ECO:0000305" key="3"/>
<reference key="1">
    <citation type="journal article" date="2001" name="Nature">
        <title>Genome sequence of enterohaemorrhagic Escherichia coli O157:H7.</title>
        <authorList>
            <person name="Perna N.T."/>
            <person name="Plunkett G. III"/>
            <person name="Burland V."/>
            <person name="Mau B."/>
            <person name="Glasner J.D."/>
            <person name="Rose D.J."/>
            <person name="Mayhew G.F."/>
            <person name="Evans P.S."/>
            <person name="Gregor J."/>
            <person name="Kirkpatrick H.A."/>
            <person name="Posfai G."/>
            <person name="Hackett J."/>
            <person name="Klink S."/>
            <person name="Boutin A."/>
            <person name="Shao Y."/>
            <person name="Miller L."/>
            <person name="Grotbeck E.J."/>
            <person name="Davis N.W."/>
            <person name="Lim A."/>
            <person name="Dimalanta E.T."/>
            <person name="Potamousis K."/>
            <person name="Apodaca J."/>
            <person name="Anantharaman T.S."/>
            <person name="Lin J."/>
            <person name="Yen G."/>
            <person name="Schwartz D.C."/>
            <person name="Welch R.A."/>
            <person name="Blattner F.R."/>
        </authorList>
    </citation>
    <scope>NUCLEOTIDE SEQUENCE [LARGE SCALE GENOMIC DNA]</scope>
    <source>
        <strain>O157:H7 / EDL933 / ATCC 700927 / EHEC</strain>
    </source>
</reference>
<reference key="2">
    <citation type="journal article" date="2001" name="DNA Res.">
        <title>Complete genome sequence of enterohemorrhagic Escherichia coli O157:H7 and genomic comparison with a laboratory strain K-12.</title>
        <authorList>
            <person name="Hayashi T."/>
            <person name="Makino K."/>
            <person name="Ohnishi M."/>
            <person name="Kurokawa K."/>
            <person name="Ishii K."/>
            <person name="Yokoyama K."/>
            <person name="Han C.-G."/>
            <person name="Ohtsubo E."/>
            <person name="Nakayama K."/>
            <person name="Murata T."/>
            <person name="Tanaka M."/>
            <person name="Tobe T."/>
            <person name="Iida T."/>
            <person name="Takami H."/>
            <person name="Honda T."/>
            <person name="Sasakawa C."/>
            <person name="Ogasawara N."/>
            <person name="Yasunaga T."/>
            <person name="Kuhara S."/>
            <person name="Shiba T."/>
            <person name="Hattori M."/>
            <person name="Shinagawa H."/>
        </authorList>
    </citation>
    <scope>NUCLEOTIDE SEQUENCE [LARGE SCALE GENOMIC DNA]</scope>
    <source>
        <strain>O157:H7 / Sakai / RIMD 0509952 / EHEC</strain>
    </source>
</reference>
<proteinExistence type="inferred from homology"/>